<name>NUOA_BURO0</name>
<comment type="function">
    <text evidence="1">NDH-1 shuttles electrons from NADH, via FMN and iron-sulfur (Fe-S) centers, to quinones in the respiratory chain. The immediate electron acceptor for the enzyme in this species is believed to be ubiquinone. Couples the redox reaction to proton translocation (for every two electrons transferred, four hydrogen ions are translocated across the cytoplasmic membrane), and thus conserves the redox energy in a proton gradient.</text>
</comment>
<comment type="catalytic activity">
    <reaction evidence="1">
        <text>a quinone + NADH + 5 H(+)(in) = a quinol + NAD(+) + 4 H(+)(out)</text>
        <dbReference type="Rhea" id="RHEA:57888"/>
        <dbReference type="ChEBI" id="CHEBI:15378"/>
        <dbReference type="ChEBI" id="CHEBI:24646"/>
        <dbReference type="ChEBI" id="CHEBI:57540"/>
        <dbReference type="ChEBI" id="CHEBI:57945"/>
        <dbReference type="ChEBI" id="CHEBI:132124"/>
    </reaction>
</comment>
<comment type="subunit">
    <text evidence="1">NDH-1 is composed of 14 different subunits. Subunits NuoA, H, J, K, L, M, N constitute the membrane sector of the complex.</text>
</comment>
<comment type="subcellular location">
    <subcellularLocation>
        <location evidence="1">Cell inner membrane</location>
        <topology evidence="1">Multi-pass membrane protein</topology>
    </subcellularLocation>
</comment>
<comment type="similarity">
    <text evidence="1">Belongs to the complex I subunit 3 family.</text>
</comment>
<gene>
    <name evidence="1" type="primary">nuoA</name>
    <name type="ordered locus">Bcenmc03_2273</name>
</gene>
<organism>
    <name type="scientific">Burkholderia orbicola (strain MC0-3)</name>
    <dbReference type="NCBI Taxonomy" id="406425"/>
    <lineage>
        <taxon>Bacteria</taxon>
        <taxon>Pseudomonadati</taxon>
        <taxon>Pseudomonadota</taxon>
        <taxon>Betaproteobacteria</taxon>
        <taxon>Burkholderiales</taxon>
        <taxon>Burkholderiaceae</taxon>
        <taxon>Burkholderia</taxon>
        <taxon>Burkholderia cepacia complex</taxon>
        <taxon>Burkholderia orbicola</taxon>
    </lineage>
</organism>
<accession>B1JVP1</accession>
<feature type="chain" id="PRO_0000362637" description="NADH-quinone oxidoreductase subunit A">
    <location>
        <begin position="1"/>
        <end position="119"/>
    </location>
</feature>
<feature type="transmembrane region" description="Helical" evidence="1">
    <location>
        <begin position="7"/>
        <end position="27"/>
    </location>
</feature>
<feature type="transmembrane region" description="Helical" evidence="1">
    <location>
        <begin position="63"/>
        <end position="83"/>
    </location>
</feature>
<feature type="transmembrane region" description="Helical" evidence="1">
    <location>
        <begin position="88"/>
        <end position="108"/>
    </location>
</feature>
<reference key="1">
    <citation type="submission" date="2008-02" db="EMBL/GenBank/DDBJ databases">
        <title>Complete sequence of chromosome 1 of Burkholderia cenocepacia MC0-3.</title>
        <authorList>
            <person name="Copeland A."/>
            <person name="Lucas S."/>
            <person name="Lapidus A."/>
            <person name="Barry K."/>
            <person name="Bruce D."/>
            <person name="Goodwin L."/>
            <person name="Glavina del Rio T."/>
            <person name="Dalin E."/>
            <person name="Tice H."/>
            <person name="Pitluck S."/>
            <person name="Chain P."/>
            <person name="Malfatti S."/>
            <person name="Shin M."/>
            <person name="Vergez L."/>
            <person name="Schmutz J."/>
            <person name="Larimer F."/>
            <person name="Land M."/>
            <person name="Hauser L."/>
            <person name="Kyrpides N."/>
            <person name="Mikhailova N."/>
            <person name="Tiedje J."/>
            <person name="Richardson P."/>
        </authorList>
    </citation>
    <scope>NUCLEOTIDE SEQUENCE [LARGE SCALE GENOMIC DNA]</scope>
    <source>
        <strain>MC0-3</strain>
    </source>
</reference>
<dbReference type="EC" id="7.1.1.-" evidence="1"/>
<dbReference type="EMBL" id="CP000958">
    <property type="protein sequence ID" value="ACA91434.1"/>
    <property type="molecule type" value="Genomic_DNA"/>
</dbReference>
<dbReference type="RefSeq" id="WP_006398798.1">
    <property type="nucleotide sequence ID" value="NC_010508.1"/>
</dbReference>
<dbReference type="SMR" id="B1JVP1"/>
<dbReference type="KEGG" id="bcm:Bcenmc03_2273"/>
<dbReference type="HOGENOM" id="CLU_119549_3_1_4"/>
<dbReference type="Proteomes" id="UP000002169">
    <property type="component" value="Chromosome 1"/>
</dbReference>
<dbReference type="GO" id="GO:0030964">
    <property type="term" value="C:NADH dehydrogenase complex"/>
    <property type="evidence" value="ECO:0007669"/>
    <property type="project" value="TreeGrafter"/>
</dbReference>
<dbReference type="GO" id="GO:0005886">
    <property type="term" value="C:plasma membrane"/>
    <property type="evidence" value="ECO:0007669"/>
    <property type="project" value="UniProtKB-SubCell"/>
</dbReference>
<dbReference type="GO" id="GO:0008137">
    <property type="term" value="F:NADH dehydrogenase (ubiquinone) activity"/>
    <property type="evidence" value="ECO:0007669"/>
    <property type="project" value="InterPro"/>
</dbReference>
<dbReference type="GO" id="GO:0050136">
    <property type="term" value="F:NADH:ubiquinone reductase (non-electrogenic) activity"/>
    <property type="evidence" value="ECO:0007669"/>
    <property type="project" value="UniProtKB-UniRule"/>
</dbReference>
<dbReference type="GO" id="GO:0048038">
    <property type="term" value="F:quinone binding"/>
    <property type="evidence" value="ECO:0007669"/>
    <property type="project" value="UniProtKB-KW"/>
</dbReference>
<dbReference type="FunFam" id="1.20.58.1610:FF:000004">
    <property type="entry name" value="NADH-quinone oxidoreductase subunit A"/>
    <property type="match status" value="1"/>
</dbReference>
<dbReference type="Gene3D" id="1.20.58.1610">
    <property type="entry name" value="NADH:ubiquinone/plastoquinone oxidoreductase, chain 3"/>
    <property type="match status" value="1"/>
</dbReference>
<dbReference type="HAMAP" id="MF_01394">
    <property type="entry name" value="NDH1_NuoA"/>
    <property type="match status" value="1"/>
</dbReference>
<dbReference type="InterPro" id="IPR023043">
    <property type="entry name" value="NAD(P)H_OxRDtase_bac/plastid"/>
</dbReference>
<dbReference type="InterPro" id="IPR000440">
    <property type="entry name" value="NADH_UbQ/plastoQ_OxRdtase_su3"/>
</dbReference>
<dbReference type="InterPro" id="IPR038430">
    <property type="entry name" value="NDAH_ubi_oxred_su3_sf"/>
</dbReference>
<dbReference type="PANTHER" id="PTHR11058">
    <property type="entry name" value="NADH-UBIQUINONE OXIDOREDUCTASE CHAIN 3"/>
    <property type="match status" value="1"/>
</dbReference>
<dbReference type="PANTHER" id="PTHR11058:SF9">
    <property type="entry name" value="NADH-UBIQUINONE OXIDOREDUCTASE CHAIN 3"/>
    <property type="match status" value="1"/>
</dbReference>
<dbReference type="Pfam" id="PF00507">
    <property type="entry name" value="Oxidored_q4"/>
    <property type="match status" value="1"/>
</dbReference>
<proteinExistence type="inferred from homology"/>
<evidence type="ECO:0000255" key="1">
    <source>
        <dbReference type="HAMAP-Rule" id="MF_01394"/>
    </source>
</evidence>
<keyword id="KW-0997">Cell inner membrane</keyword>
<keyword id="KW-1003">Cell membrane</keyword>
<keyword id="KW-0472">Membrane</keyword>
<keyword id="KW-0520">NAD</keyword>
<keyword id="KW-0874">Quinone</keyword>
<keyword id="KW-1278">Translocase</keyword>
<keyword id="KW-0812">Transmembrane</keyword>
<keyword id="KW-1133">Transmembrane helix</keyword>
<keyword id="KW-0813">Transport</keyword>
<keyword id="KW-0830">Ubiquinone</keyword>
<protein>
    <recommendedName>
        <fullName evidence="1">NADH-quinone oxidoreductase subunit A</fullName>
        <ecNumber evidence="1">7.1.1.-</ecNumber>
    </recommendedName>
    <alternativeName>
        <fullName evidence="1">NADH dehydrogenase I subunit A</fullName>
    </alternativeName>
    <alternativeName>
        <fullName evidence="1">NDH-1 subunit A</fullName>
    </alternativeName>
    <alternativeName>
        <fullName evidence="1">NUO1</fullName>
    </alternativeName>
</protein>
<sequence>MNLAAYYPVLLFLLVGTGLGIALVSIGKLLGPNKPDVEKNAPYECGFEAFEDARMKFDVRYYLVAILFIIFDLETAFLFPWGVALRDIGWPGFIAMMIFLLEFLLGFAYIWKKGGLDWE</sequence>